<keyword id="KW-0067">ATP-binding</keyword>
<keyword id="KW-0418">Kinase</keyword>
<keyword id="KW-0441">Lipid A biosynthesis</keyword>
<keyword id="KW-0444">Lipid biosynthesis</keyword>
<keyword id="KW-0443">Lipid metabolism</keyword>
<keyword id="KW-0547">Nucleotide-binding</keyword>
<keyword id="KW-1185">Reference proteome</keyword>
<keyword id="KW-0808">Transferase</keyword>
<dbReference type="EC" id="2.7.1.130" evidence="1"/>
<dbReference type="EMBL" id="CP000468">
    <property type="protein sequence ID" value="ABJ00332.1"/>
    <property type="molecule type" value="Genomic_DNA"/>
</dbReference>
<dbReference type="RefSeq" id="WP_000570549.1">
    <property type="nucleotide sequence ID" value="NZ_CADILS010000016.1"/>
</dbReference>
<dbReference type="SMR" id="A1A9J2"/>
<dbReference type="KEGG" id="ecv:APECO1_27"/>
<dbReference type="HOGENOM" id="CLU_038816_2_0_6"/>
<dbReference type="UniPathway" id="UPA00359">
    <property type="reaction ID" value="UER00482"/>
</dbReference>
<dbReference type="Proteomes" id="UP000008216">
    <property type="component" value="Chromosome"/>
</dbReference>
<dbReference type="GO" id="GO:0005886">
    <property type="term" value="C:plasma membrane"/>
    <property type="evidence" value="ECO:0007669"/>
    <property type="project" value="TreeGrafter"/>
</dbReference>
<dbReference type="GO" id="GO:0005524">
    <property type="term" value="F:ATP binding"/>
    <property type="evidence" value="ECO:0007669"/>
    <property type="project" value="UniProtKB-UniRule"/>
</dbReference>
<dbReference type="GO" id="GO:0009029">
    <property type="term" value="F:tetraacyldisaccharide 4'-kinase activity"/>
    <property type="evidence" value="ECO:0007669"/>
    <property type="project" value="UniProtKB-UniRule"/>
</dbReference>
<dbReference type="GO" id="GO:0009245">
    <property type="term" value="P:lipid A biosynthetic process"/>
    <property type="evidence" value="ECO:0007669"/>
    <property type="project" value="UniProtKB-UniRule"/>
</dbReference>
<dbReference type="GO" id="GO:0009244">
    <property type="term" value="P:lipopolysaccharide core region biosynthetic process"/>
    <property type="evidence" value="ECO:0007669"/>
    <property type="project" value="TreeGrafter"/>
</dbReference>
<dbReference type="HAMAP" id="MF_00409">
    <property type="entry name" value="LpxK"/>
    <property type="match status" value="1"/>
</dbReference>
<dbReference type="InterPro" id="IPR003758">
    <property type="entry name" value="LpxK"/>
</dbReference>
<dbReference type="InterPro" id="IPR027417">
    <property type="entry name" value="P-loop_NTPase"/>
</dbReference>
<dbReference type="NCBIfam" id="TIGR00682">
    <property type="entry name" value="lpxK"/>
    <property type="match status" value="1"/>
</dbReference>
<dbReference type="PANTHER" id="PTHR42724">
    <property type="entry name" value="TETRAACYLDISACCHARIDE 4'-KINASE"/>
    <property type="match status" value="1"/>
</dbReference>
<dbReference type="PANTHER" id="PTHR42724:SF1">
    <property type="entry name" value="TETRAACYLDISACCHARIDE 4'-KINASE, MITOCHONDRIAL-RELATED"/>
    <property type="match status" value="1"/>
</dbReference>
<dbReference type="Pfam" id="PF02606">
    <property type="entry name" value="LpxK"/>
    <property type="match status" value="1"/>
</dbReference>
<dbReference type="SUPFAM" id="SSF52540">
    <property type="entry name" value="P-loop containing nucleoside triphosphate hydrolases"/>
    <property type="match status" value="1"/>
</dbReference>
<proteinExistence type="inferred from homology"/>
<name>LPXK_ECOK1</name>
<feature type="chain" id="PRO_0000291204" description="Tetraacyldisaccharide 4'-kinase">
    <location>
        <begin position="1"/>
        <end position="328"/>
    </location>
</feature>
<feature type="binding site" evidence="1">
    <location>
        <begin position="55"/>
        <end position="62"/>
    </location>
    <ligand>
        <name>ATP</name>
        <dbReference type="ChEBI" id="CHEBI:30616"/>
    </ligand>
</feature>
<gene>
    <name evidence="1" type="primary">lpxK</name>
    <name type="ordered locus">Ecok1_08380</name>
    <name type="ORF">APECO1_27</name>
</gene>
<evidence type="ECO:0000255" key="1">
    <source>
        <dbReference type="HAMAP-Rule" id="MF_00409"/>
    </source>
</evidence>
<protein>
    <recommendedName>
        <fullName evidence="1">Tetraacyldisaccharide 4'-kinase</fullName>
        <ecNumber evidence="1">2.7.1.130</ecNumber>
    </recommendedName>
    <alternativeName>
        <fullName evidence="1">Lipid A 4'-kinase</fullName>
    </alternativeName>
</protein>
<accession>A1A9J2</accession>
<reference key="1">
    <citation type="journal article" date="2007" name="J. Bacteriol.">
        <title>The genome sequence of avian pathogenic Escherichia coli strain O1:K1:H7 shares strong similarities with human extraintestinal pathogenic E. coli genomes.</title>
        <authorList>
            <person name="Johnson T.J."/>
            <person name="Kariyawasam S."/>
            <person name="Wannemuehler Y."/>
            <person name="Mangiamele P."/>
            <person name="Johnson S.J."/>
            <person name="Doetkott C."/>
            <person name="Skyberg J.A."/>
            <person name="Lynne A.M."/>
            <person name="Johnson J.R."/>
            <person name="Nolan L.K."/>
        </authorList>
    </citation>
    <scope>NUCLEOTIDE SEQUENCE [LARGE SCALE GENOMIC DNA]</scope>
</reference>
<sequence>MIEKIWSGESPLWRLLLPLSWLYGLVSGAIRLCYKLKLKRAWRAPVPVVVVGNLTAGGNGKTPVVVWLVEQLQQRGIRVGVVSRGYGGKAESYPLLLSADTTTAQAGDEPVLIYQRTGAPVAVSPVRSDAVKAILAQHPDVQIIVTDDGLQHYRLARDVEIVVIDGVRRFGNGWWLPAGPMRERAGRLKSVDAVIVNGGVPRSGEIPMHLLPGQAVNLRTGTRCDVAQLEHVVAIAGIGHPPRFFATLKMCGVQPEKCVPLADHQSLNHADVSALVSAGQTLVMTEKDAVKCRAFAEENWWYLPVDAQLSGDEPAKLLAQLTSLASGH</sequence>
<comment type="function">
    <text evidence="1">Transfers the gamma-phosphate of ATP to the 4'-position of a tetraacyldisaccharide 1-phosphate intermediate (termed DS-1-P) to form tetraacyldisaccharide 1,4'-bis-phosphate (lipid IVA).</text>
</comment>
<comment type="catalytic activity">
    <reaction evidence="1">
        <text>a lipid A disaccharide + ATP = a lipid IVA + ADP + H(+)</text>
        <dbReference type="Rhea" id="RHEA:67840"/>
        <dbReference type="ChEBI" id="CHEBI:15378"/>
        <dbReference type="ChEBI" id="CHEBI:30616"/>
        <dbReference type="ChEBI" id="CHEBI:176343"/>
        <dbReference type="ChEBI" id="CHEBI:176425"/>
        <dbReference type="ChEBI" id="CHEBI:456216"/>
        <dbReference type="EC" id="2.7.1.130"/>
    </reaction>
</comment>
<comment type="pathway">
    <text evidence="1">Glycolipid biosynthesis; lipid IV(A) biosynthesis; lipid IV(A) from (3R)-3-hydroxytetradecanoyl-[acyl-carrier-protein] and UDP-N-acetyl-alpha-D-glucosamine: step 6/6.</text>
</comment>
<comment type="similarity">
    <text evidence="1">Belongs to the LpxK family.</text>
</comment>
<organism>
    <name type="scientific">Escherichia coli O1:K1 / APEC</name>
    <dbReference type="NCBI Taxonomy" id="405955"/>
    <lineage>
        <taxon>Bacteria</taxon>
        <taxon>Pseudomonadati</taxon>
        <taxon>Pseudomonadota</taxon>
        <taxon>Gammaproteobacteria</taxon>
        <taxon>Enterobacterales</taxon>
        <taxon>Enterobacteriaceae</taxon>
        <taxon>Escherichia</taxon>
    </lineage>
</organism>